<sequence>MENMFRRVIFEKKALDYPMGRDILRQFENTDIEIRYSETGRITGIPGKDEAQSFFEGKNTLVVGVRRELDFQTCKPSANYQLPIVSGCAAMCEYCYLNTHGGKKPYVKINVNLDDILSKAGEYIEKRKPDITVFEGAAISDPVPVERYSGALKKAIEYFGKNEYSRFRFVTKYADISELLAVQHNNHTTIRFSINTPRVIKNYEHRTSSLEDRIESAYNILNSGYKTGFIVGPVFLYENWKKEYEELLKKASDKLGDKELEFEIISHRFTTSAKNKILKVFPNTKLPMDDEARKFKFGQFGYGKYVYDKDDMQEIKEFFINNINLYFNKATIKYII</sequence>
<name>SPLB_CLOAB</name>
<organism>
    <name type="scientific">Clostridium acetobutylicum (strain ATCC 824 / DSM 792 / JCM 1419 / IAM 19013 / LMG 5710 / NBRC 13948 / NRRL B-527 / VKM B-1787 / 2291 / W)</name>
    <dbReference type="NCBI Taxonomy" id="272562"/>
    <lineage>
        <taxon>Bacteria</taxon>
        <taxon>Bacillati</taxon>
        <taxon>Bacillota</taxon>
        <taxon>Clostridia</taxon>
        <taxon>Eubacteriales</taxon>
        <taxon>Clostridiaceae</taxon>
        <taxon>Clostridium</taxon>
    </lineage>
</organism>
<protein>
    <recommendedName>
        <fullName>Spore photoproduct lyase</fullName>
        <ecNumber>4.1.99.14</ecNumber>
    </recommendedName>
</protein>
<accession>Q97L63</accession>
<feature type="chain" id="PRO_0000397844" description="Spore photoproduct lyase">
    <location>
        <begin position="1"/>
        <end position="336"/>
    </location>
</feature>
<feature type="domain" description="Radical SAM core" evidence="3">
    <location>
        <begin position="74"/>
        <end position="305"/>
    </location>
</feature>
<feature type="DNA-binding region" description="H-T-H motif" evidence="2">
    <location>
        <begin position="215"/>
        <end position="232"/>
    </location>
</feature>
<feature type="binding site" evidence="1">
    <location>
        <position position="88"/>
    </location>
    <ligand>
        <name>[4Fe-4S] cluster</name>
        <dbReference type="ChEBI" id="CHEBI:49883"/>
        <note>4Fe-4S-S-AdoMet</note>
    </ligand>
</feature>
<feature type="binding site" evidence="1">
    <location>
        <position position="92"/>
    </location>
    <ligand>
        <name>[4Fe-4S] cluster</name>
        <dbReference type="ChEBI" id="CHEBI:49883"/>
        <note>4Fe-4S-S-AdoMet</note>
    </ligand>
</feature>
<feature type="binding site" evidence="1">
    <location>
        <position position="95"/>
    </location>
    <ligand>
        <name>[4Fe-4S] cluster</name>
        <dbReference type="ChEBI" id="CHEBI:49883"/>
        <note>4Fe-4S-S-AdoMet</note>
    </ligand>
</feature>
<evidence type="ECO:0000250" key="1"/>
<evidence type="ECO:0000255" key="2"/>
<evidence type="ECO:0000255" key="3">
    <source>
        <dbReference type="PROSITE-ProRule" id="PRU01266"/>
    </source>
</evidence>
<evidence type="ECO:0000269" key="4">
    <source>
    </source>
</evidence>
<evidence type="ECO:0000269" key="5">
    <source>
    </source>
</evidence>
<evidence type="ECO:0000305" key="6"/>
<dbReference type="EC" id="4.1.99.14"/>
<dbReference type="EMBL" id="AE001437">
    <property type="protein sequence ID" value="AAK78676.1"/>
    <property type="molecule type" value="Genomic_DNA"/>
</dbReference>
<dbReference type="PIR" id="A96986">
    <property type="entry name" value="A96986"/>
</dbReference>
<dbReference type="RefSeq" id="NP_347336.1">
    <property type="nucleotide sequence ID" value="NC_003030.1"/>
</dbReference>
<dbReference type="RefSeq" id="WP_010964018.1">
    <property type="nucleotide sequence ID" value="NC_003030.1"/>
</dbReference>
<dbReference type="SMR" id="Q97L63"/>
<dbReference type="STRING" id="272562.CA_C0699"/>
<dbReference type="KEGG" id="cac:CA_C0699"/>
<dbReference type="PATRIC" id="fig|272562.8.peg.902"/>
<dbReference type="eggNOG" id="COG1533">
    <property type="taxonomic scope" value="Bacteria"/>
</dbReference>
<dbReference type="HOGENOM" id="CLU_057301_0_0_9"/>
<dbReference type="OrthoDB" id="9787095at2"/>
<dbReference type="BRENDA" id="4.1.99.14">
    <property type="organism ID" value="1452"/>
</dbReference>
<dbReference type="Proteomes" id="UP000000814">
    <property type="component" value="Chromosome"/>
</dbReference>
<dbReference type="GO" id="GO:0042601">
    <property type="term" value="C:endospore-forming forespore"/>
    <property type="evidence" value="ECO:0007669"/>
    <property type="project" value="TreeGrafter"/>
</dbReference>
<dbReference type="GO" id="GO:0051539">
    <property type="term" value="F:4 iron, 4 sulfur cluster binding"/>
    <property type="evidence" value="ECO:0007669"/>
    <property type="project" value="UniProtKB-KW"/>
</dbReference>
<dbReference type="GO" id="GO:0003677">
    <property type="term" value="F:DNA binding"/>
    <property type="evidence" value="ECO:0007669"/>
    <property type="project" value="UniProtKB-KW"/>
</dbReference>
<dbReference type="GO" id="GO:0003913">
    <property type="term" value="F:DNA photolyase activity"/>
    <property type="evidence" value="ECO:0000314"/>
    <property type="project" value="UniProtKB"/>
</dbReference>
<dbReference type="GO" id="GO:0051536">
    <property type="term" value="F:iron-sulfur cluster binding"/>
    <property type="evidence" value="ECO:0000314"/>
    <property type="project" value="UniProtKB"/>
</dbReference>
<dbReference type="GO" id="GO:0046872">
    <property type="term" value="F:metal ion binding"/>
    <property type="evidence" value="ECO:0000314"/>
    <property type="project" value="UniProtKB"/>
</dbReference>
<dbReference type="GO" id="GO:1904047">
    <property type="term" value="F:S-adenosyl-L-methionine binding"/>
    <property type="evidence" value="ECO:0000314"/>
    <property type="project" value="UniProtKB"/>
</dbReference>
<dbReference type="GO" id="GO:0006281">
    <property type="term" value="P:DNA repair"/>
    <property type="evidence" value="ECO:0007669"/>
    <property type="project" value="UniProtKB-KW"/>
</dbReference>
<dbReference type="GO" id="GO:0030435">
    <property type="term" value="P:sporulation resulting in formation of a cellular spore"/>
    <property type="evidence" value="ECO:0007669"/>
    <property type="project" value="UniProtKB-KW"/>
</dbReference>
<dbReference type="Gene3D" id="3.40.50.12110">
    <property type="match status" value="1"/>
</dbReference>
<dbReference type="Gene3D" id="3.80.30.30">
    <property type="match status" value="1"/>
</dbReference>
<dbReference type="InterPro" id="IPR007197">
    <property type="entry name" value="rSAM"/>
</dbReference>
<dbReference type="InterPro" id="IPR049539">
    <property type="entry name" value="SPL"/>
</dbReference>
<dbReference type="InterPro" id="IPR034559">
    <property type="entry name" value="SPL_Clostridia"/>
</dbReference>
<dbReference type="InterPro" id="IPR023897">
    <property type="entry name" value="SPL_firmicutes"/>
</dbReference>
<dbReference type="NCBIfam" id="TIGR04070">
    <property type="entry name" value="photo_TT_lyase"/>
    <property type="match status" value="1"/>
</dbReference>
<dbReference type="PANTHER" id="PTHR37822:SF2">
    <property type="entry name" value="SPORE PHOTOPRODUCT LYASE"/>
    <property type="match status" value="1"/>
</dbReference>
<dbReference type="PANTHER" id="PTHR37822">
    <property type="entry name" value="SPORE PHOTOPRODUCT LYASE-RELATED"/>
    <property type="match status" value="1"/>
</dbReference>
<dbReference type="Pfam" id="PF20903">
    <property type="entry name" value="SPL"/>
    <property type="match status" value="1"/>
</dbReference>
<dbReference type="SFLD" id="SFLDS00029">
    <property type="entry name" value="Radical_SAM"/>
    <property type="match status" value="1"/>
</dbReference>
<dbReference type="SFLD" id="SFLDF00412">
    <property type="entry name" value="spore_photoproduct_lyase_2"/>
    <property type="match status" value="1"/>
</dbReference>
<dbReference type="SUPFAM" id="SSF102114">
    <property type="entry name" value="Radical SAM enzymes"/>
    <property type="match status" value="1"/>
</dbReference>
<dbReference type="PROSITE" id="PS51918">
    <property type="entry name" value="RADICAL_SAM"/>
    <property type="match status" value="1"/>
</dbReference>
<gene>
    <name type="primary">splB</name>
    <name type="ordered locus">CA_C0699</name>
</gene>
<comment type="function">
    <text evidence="4 5">Involved in repair of UV radiation-induced DNA damage during spore germination. Can repair thymine dimer 5-thyminyl-5,6-dihydrothymine (known as spore photoproduct (SP)) by in situ monomerization of SP to two thymines.</text>
</comment>
<comment type="catalytic activity">
    <reaction evidence="4 5">
        <text>(5R)-5,6-dihydro-5-(thymidin-7-yl)thymidine in DNA = a thymidine dimer in DNA</text>
        <dbReference type="Rhea" id="RHEA:56132"/>
        <dbReference type="Rhea" id="RHEA-COMP:14387"/>
        <dbReference type="Rhea" id="RHEA-COMP:14449"/>
        <dbReference type="ChEBI" id="CHEBI:139518"/>
        <dbReference type="ChEBI" id="CHEBI:139519"/>
        <dbReference type="EC" id="4.1.99.14"/>
    </reaction>
</comment>
<comment type="cofactor">
    <cofactor evidence="5">
        <name>[4Fe-4S] cluster</name>
        <dbReference type="ChEBI" id="CHEBI:49883"/>
    </cofactor>
    <text evidence="5">Binds 1 [4Fe-4S] cluster per subunit. The cluster is coordinated with 3 cysteines and an exchangeable S-adenosyl-L-methionine.</text>
</comment>
<comment type="cofactor">
    <cofactor evidence="5">
        <name>S-adenosyl-L-methionine</name>
        <dbReference type="ChEBI" id="CHEBI:59789"/>
    </cofactor>
    <text evidence="5">Binds 1 S-adenosyl-L-methionine per subunit.</text>
</comment>
<comment type="subunit">
    <text evidence="1">Monomer or homodimer.</text>
</comment>
<comment type="similarity">
    <text evidence="6">Belongs to the radical SAM superfamily. SPL family.</text>
</comment>
<proteinExistence type="evidence at protein level"/>
<keyword id="KW-0004">4Fe-4S</keyword>
<keyword id="KW-0227">DNA damage</keyword>
<keyword id="KW-0234">DNA repair</keyword>
<keyword id="KW-0238">DNA-binding</keyword>
<keyword id="KW-0408">Iron</keyword>
<keyword id="KW-0411">Iron-sulfur</keyword>
<keyword id="KW-0456">Lyase</keyword>
<keyword id="KW-0479">Metal-binding</keyword>
<keyword id="KW-1185">Reference proteome</keyword>
<keyword id="KW-0949">S-adenosyl-L-methionine</keyword>
<keyword id="KW-0749">Sporulation</keyword>
<reference key="1">
    <citation type="journal article" date="2001" name="J. Bacteriol.">
        <title>Genome sequence and comparative analysis of the solvent-producing bacterium Clostridium acetobutylicum.</title>
        <authorList>
            <person name="Noelling J."/>
            <person name="Breton G."/>
            <person name="Omelchenko M.V."/>
            <person name="Makarova K.S."/>
            <person name="Zeng Q."/>
            <person name="Gibson R."/>
            <person name="Lee H.M."/>
            <person name="Dubois J."/>
            <person name="Qiu D."/>
            <person name="Hitti J."/>
            <person name="Wolf Y.I."/>
            <person name="Tatusov R.L."/>
            <person name="Sabathe F."/>
            <person name="Doucette-Stamm L.A."/>
            <person name="Soucaille P."/>
            <person name="Daly M.J."/>
            <person name="Bennett G.N."/>
            <person name="Koonin E.V."/>
            <person name="Smith D.R."/>
        </authorList>
    </citation>
    <scope>NUCLEOTIDE SEQUENCE [LARGE SCALE GENOMIC DNA]</scope>
    <source>
        <strain>ATCC 824 / DSM 792 / JCM 1419 / IAM 19013 / LMG 5710 / NBRC 13948 / NRRL B-527 / VKM B-1787 / 2291 / W</strain>
    </source>
</reference>
<reference key="2">
    <citation type="journal article" date="2009" name="J. Am. Chem. Soc.">
        <title>Spore photoproduct lyase catalyzes specific repair of the 5R but not the 5S spore photoproduct.</title>
        <authorList>
            <person name="Chandra T."/>
            <person name="Silver S.C."/>
            <person name="Zilinskas E."/>
            <person name="Shepard E.M."/>
            <person name="Broderick W.E."/>
            <person name="Broderick J.B."/>
        </authorList>
    </citation>
    <scope>FUNCTION</scope>
    <scope>CATALYTIC ACTIVITY</scope>
    <scope>SUBSTRATE SPECIFICITY</scope>
</reference>
<reference key="3">
    <citation type="journal article" date="2010" name="J. Biol. Inorg. Chem.">
        <title>Complete stereospecific repair of a synthetic dinucleotide spore photoproduct by spore photoproduct lyase.</title>
        <authorList>
            <person name="Silver S.C."/>
            <person name="Chandra T."/>
            <person name="Zilinskas E."/>
            <person name="Ghose S."/>
            <person name="Broderick W.E."/>
            <person name="Broderick J.B."/>
        </authorList>
    </citation>
    <scope>FUNCTION</scope>
    <scope>CATALYTIC ACTIVITY</scope>
    <scope>COFACTOR</scope>
    <source>
        <strain>ATCC 824 / DSM 792 / JCM 1419 / IAM 19013 / LMG 5710 / NBRC 13948 / NRRL B-527 / VKM B-1787 / 2291 / W</strain>
    </source>
</reference>